<gene>
    <name evidence="1" type="primary">rplL</name>
    <name type="ordered locus">YPTS_0302</name>
</gene>
<accession>B2K111</accession>
<organism>
    <name type="scientific">Yersinia pseudotuberculosis serotype IB (strain PB1/+)</name>
    <dbReference type="NCBI Taxonomy" id="502801"/>
    <lineage>
        <taxon>Bacteria</taxon>
        <taxon>Pseudomonadati</taxon>
        <taxon>Pseudomonadota</taxon>
        <taxon>Gammaproteobacteria</taxon>
        <taxon>Enterobacterales</taxon>
        <taxon>Yersiniaceae</taxon>
        <taxon>Yersinia</taxon>
    </lineage>
</organism>
<protein>
    <recommendedName>
        <fullName evidence="1">Large ribosomal subunit protein bL12</fullName>
    </recommendedName>
    <alternativeName>
        <fullName evidence="2">50S ribosomal protein L7/L12</fullName>
    </alternativeName>
</protein>
<dbReference type="EMBL" id="CP001048">
    <property type="protein sequence ID" value="ACC87293.1"/>
    <property type="molecule type" value="Genomic_DNA"/>
</dbReference>
<dbReference type="RefSeq" id="WP_002210675.1">
    <property type="nucleotide sequence ID" value="NZ_CP009780.1"/>
</dbReference>
<dbReference type="SMR" id="B2K111"/>
<dbReference type="GeneID" id="96663775"/>
<dbReference type="KEGG" id="ypb:YPTS_0302"/>
<dbReference type="PATRIC" id="fig|502801.10.peg.3977"/>
<dbReference type="GO" id="GO:0022625">
    <property type="term" value="C:cytosolic large ribosomal subunit"/>
    <property type="evidence" value="ECO:0007669"/>
    <property type="project" value="TreeGrafter"/>
</dbReference>
<dbReference type="GO" id="GO:0003729">
    <property type="term" value="F:mRNA binding"/>
    <property type="evidence" value="ECO:0007669"/>
    <property type="project" value="TreeGrafter"/>
</dbReference>
<dbReference type="GO" id="GO:0003735">
    <property type="term" value="F:structural constituent of ribosome"/>
    <property type="evidence" value="ECO:0007669"/>
    <property type="project" value="InterPro"/>
</dbReference>
<dbReference type="GO" id="GO:0006412">
    <property type="term" value="P:translation"/>
    <property type="evidence" value="ECO:0007669"/>
    <property type="project" value="UniProtKB-UniRule"/>
</dbReference>
<dbReference type="CDD" id="cd00387">
    <property type="entry name" value="Ribosomal_L7_L12"/>
    <property type="match status" value="1"/>
</dbReference>
<dbReference type="FunFam" id="3.30.1390.10:FF:000001">
    <property type="entry name" value="50S ribosomal protein L7/L12"/>
    <property type="match status" value="1"/>
</dbReference>
<dbReference type="Gene3D" id="3.30.1390.10">
    <property type="match status" value="1"/>
</dbReference>
<dbReference type="Gene3D" id="1.20.5.710">
    <property type="entry name" value="Single helix bin"/>
    <property type="match status" value="1"/>
</dbReference>
<dbReference type="HAMAP" id="MF_00368">
    <property type="entry name" value="Ribosomal_bL12"/>
    <property type="match status" value="1"/>
</dbReference>
<dbReference type="InterPro" id="IPR000206">
    <property type="entry name" value="Ribosomal_bL12"/>
</dbReference>
<dbReference type="InterPro" id="IPR013823">
    <property type="entry name" value="Ribosomal_bL12_C"/>
</dbReference>
<dbReference type="InterPro" id="IPR014719">
    <property type="entry name" value="Ribosomal_bL12_C/ClpS-like"/>
</dbReference>
<dbReference type="InterPro" id="IPR008932">
    <property type="entry name" value="Ribosomal_bL12_oligo"/>
</dbReference>
<dbReference type="InterPro" id="IPR036235">
    <property type="entry name" value="Ribosomal_bL12_oligo_N_sf"/>
</dbReference>
<dbReference type="NCBIfam" id="TIGR00855">
    <property type="entry name" value="L12"/>
    <property type="match status" value="1"/>
</dbReference>
<dbReference type="PANTHER" id="PTHR45987">
    <property type="entry name" value="39S RIBOSOMAL PROTEIN L12"/>
    <property type="match status" value="1"/>
</dbReference>
<dbReference type="PANTHER" id="PTHR45987:SF4">
    <property type="entry name" value="LARGE RIBOSOMAL SUBUNIT PROTEIN BL12M"/>
    <property type="match status" value="1"/>
</dbReference>
<dbReference type="Pfam" id="PF00542">
    <property type="entry name" value="Ribosomal_L12"/>
    <property type="match status" value="1"/>
</dbReference>
<dbReference type="Pfam" id="PF16320">
    <property type="entry name" value="Ribosomal_L12_N"/>
    <property type="match status" value="1"/>
</dbReference>
<dbReference type="SUPFAM" id="SSF54736">
    <property type="entry name" value="ClpS-like"/>
    <property type="match status" value="1"/>
</dbReference>
<dbReference type="SUPFAM" id="SSF48300">
    <property type="entry name" value="Ribosomal protein L7/12, oligomerisation (N-terminal) domain"/>
    <property type="match status" value="1"/>
</dbReference>
<sequence length="122" mass="12530">MSTITKDQILEGVAALSVMEIVELISAMEEKFGVSAAAVAAGPAAAVEAAEEQTEFDVVLASFGENKVAVIKAVRGATGLGLKEAKDLVESAPAVLKEGVNKDEAETLKKSLEEAGASVEIK</sequence>
<evidence type="ECO:0000255" key="1">
    <source>
        <dbReference type="HAMAP-Rule" id="MF_00368"/>
    </source>
</evidence>
<evidence type="ECO:0000305" key="2"/>
<comment type="function">
    <text evidence="1">Forms part of the ribosomal stalk which helps the ribosome interact with GTP-bound translation factors. Is thus essential for accurate translation.</text>
</comment>
<comment type="subunit">
    <text evidence="1">Homodimer. Part of the ribosomal stalk of the 50S ribosomal subunit. Forms a multimeric L10(L12)X complex, where L10 forms an elongated spine to which 2 to 4 L12 dimers bind in a sequential fashion. Binds GTP-bound translation factors.</text>
</comment>
<comment type="similarity">
    <text evidence="1">Belongs to the bacterial ribosomal protein bL12 family.</text>
</comment>
<proteinExistence type="inferred from homology"/>
<feature type="chain" id="PRO_1000121511" description="Large ribosomal subunit protein bL12">
    <location>
        <begin position="1"/>
        <end position="122"/>
    </location>
</feature>
<keyword id="KW-0687">Ribonucleoprotein</keyword>
<keyword id="KW-0689">Ribosomal protein</keyword>
<name>RL7_YERPB</name>
<reference key="1">
    <citation type="submission" date="2008-04" db="EMBL/GenBank/DDBJ databases">
        <title>Complete sequence of Yersinia pseudotuberculosis PB1/+.</title>
        <authorList>
            <person name="Copeland A."/>
            <person name="Lucas S."/>
            <person name="Lapidus A."/>
            <person name="Glavina del Rio T."/>
            <person name="Dalin E."/>
            <person name="Tice H."/>
            <person name="Bruce D."/>
            <person name="Goodwin L."/>
            <person name="Pitluck S."/>
            <person name="Munk A.C."/>
            <person name="Brettin T."/>
            <person name="Detter J.C."/>
            <person name="Han C."/>
            <person name="Tapia R."/>
            <person name="Schmutz J."/>
            <person name="Larimer F."/>
            <person name="Land M."/>
            <person name="Hauser L."/>
            <person name="Challacombe J.F."/>
            <person name="Green L."/>
            <person name="Lindler L.E."/>
            <person name="Nikolich M.P."/>
            <person name="Richardson P."/>
        </authorList>
    </citation>
    <scope>NUCLEOTIDE SEQUENCE [LARGE SCALE GENOMIC DNA]</scope>
    <source>
        <strain>PB1/+</strain>
    </source>
</reference>